<evidence type="ECO:0000255" key="1">
    <source>
        <dbReference type="HAMAP-Rule" id="MF_00171"/>
    </source>
</evidence>
<dbReference type="EC" id="5.4.99.12" evidence="1"/>
<dbReference type="EMBL" id="CP000576">
    <property type="protein sequence ID" value="ABO18348.1"/>
    <property type="molecule type" value="Genomic_DNA"/>
</dbReference>
<dbReference type="RefSeq" id="WP_011863641.1">
    <property type="nucleotide sequence ID" value="NC_009091.1"/>
</dbReference>
<dbReference type="SMR" id="A3PF23"/>
<dbReference type="STRING" id="167546.P9301_17251"/>
<dbReference type="KEGG" id="pmg:P9301_17251"/>
<dbReference type="eggNOG" id="COG0101">
    <property type="taxonomic scope" value="Bacteria"/>
</dbReference>
<dbReference type="HOGENOM" id="CLU_014673_0_1_3"/>
<dbReference type="OrthoDB" id="9811823at2"/>
<dbReference type="Proteomes" id="UP000001430">
    <property type="component" value="Chromosome"/>
</dbReference>
<dbReference type="GO" id="GO:0003723">
    <property type="term" value="F:RNA binding"/>
    <property type="evidence" value="ECO:0007669"/>
    <property type="project" value="InterPro"/>
</dbReference>
<dbReference type="GO" id="GO:0160147">
    <property type="term" value="F:tRNA pseudouridine(38-40) synthase activity"/>
    <property type="evidence" value="ECO:0007669"/>
    <property type="project" value="UniProtKB-EC"/>
</dbReference>
<dbReference type="GO" id="GO:0031119">
    <property type="term" value="P:tRNA pseudouridine synthesis"/>
    <property type="evidence" value="ECO:0007669"/>
    <property type="project" value="UniProtKB-UniRule"/>
</dbReference>
<dbReference type="CDD" id="cd02570">
    <property type="entry name" value="PseudoU_synth_EcTruA"/>
    <property type="match status" value="1"/>
</dbReference>
<dbReference type="FunFam" id="3.30.70.580:FF:000001">
    <property type="entry name" value="tRNA pseudouridine synthase A"/>
    <property type="match status" value="1"/>
</dbReference>
<dbReference type="Gene3D" id="3.30.70.660">
    <property type="entry name" value="Pseudouridine synthase I, catalytic domain, C-terminal subdomain"/>
    <property type="match status" value="1"/>
</dbReference>
<dbReference type="Gene3D" id="3.30.70.580">
    <property type="entry name" value="Pseudouridine synthase I, catalytic domain, N-terminal subdomain"/>
    <property type="match status" value="1"/>
</dbReference>
<dbReference type="HAMAP" id="MF_00171">
    <property type="entry name" value="TruA"/>
    <property type="match status" value="1"/>
</dbReference>
<dbReference type="InterPro" id="IPR020103">
    <property type="entry name" value="PsdUridine_synth_cat_dom_sf"/>
</dbReference>
<dbReference type="InterPro" id="IPR001406">
    <property type="entry name" value="PsdUridine_synth_TruA"/>
</dbReference>
<dbReference type="InterPro" id="IPR020097">
    <property type="entry name" value="PsdUridine_synth_TruA_a/b_dom"/>
</dbReference>
<dbReference type="InterPro" id="IPR020095">
    <property type="entry name" value="PsdUridine_synth_TruA_C"/>
</dbReference>
<dbReference type="InterPro" id="IPR020094">
    <property type="entry name" value="TruA/RsuA/RluB/E/F_N"/>
</dbReference>
<dbReference type="NCBIfam" id="TIGR00071">
    <property type="entry name" value="hisT_truA"/>
    <property type="match status" value="1"/>
</dbReference>
<dbReference type="PANTHER" id="PTHR11142">
    <property type="entry name" value="PSEUDOURIDYLATE SYNTHASE"/>
    <property type="match status" value="1"/>
</dbReference>
<dbReference type="PANTHER" id="PTHR11142:SF0">
    <property type="entry name" value="TRNA PSEUDOURIDINE SYNTHASE-LIKE 1"/>
    <property type="match status" value="1"/>
</dbReference>
<dbReference type="Pfam" id="PF01416">
    <property type="entry name" value="PseudoU_synth_1"/>
    <property type="match status" value="2"/>
</dbReference>
<dbReference type="PIRSF" id="PIRSF001430">
    <property type="entry name" value="tRNA_psdUrid_synth"/>
    <property type="match status" value="1"/>
</dbReference>
<dbReference type="SUPFAM" id="SSF55120">
    <property type="entry name" value="Pseudouridine synthase"/>
    <property type="match status" value="1"/>
</dbReference>
<proteinExistence type="inferred from homology"/>
<gene>
    <name evidence="1" type="primary">truA</name>
    <name type="ordered locus">P9301_17251</name>
</gene>
<protein>
    <recommendedName>
        <fullName evidence="1">tRNA pseudouridine synthase A</fullName>
        <ecNumber evidence="1">5.4.99.12</ecNumber>
    </recommendedName>
    <alternativeName>
        <fullName evidence="1">tRNA pseudouridine(38-40) synthase</fullName>
    </alternativeName>
    <alternativeName>
        <fullName evidence="1">tRNA pseudouridylate synthase I</fullName>
    </alternativeName>
    <alternativeName>
        <fullName evidence="1">tRNA-uridine isomerase I</fullName>
    </alternativeName>
</protein>
<comment type="function">
    <text evidence="1">Formation of pseudouridine at positions 38, 39 and 40 in the anticodon stem and loop of transfer RNAs.</text>
</comment>
<comment type="catalytic activity">
    <reaction evidence="1">
        <text>uridine(38/39/40) in tRNA = pseudouridine(38/39/40) in tRNA</text>
        <dbReference type="Rhea" id="RHEA:22376"/>
        <dbReference type="Rhea" id="RHEA-COMP:10085"/>
        <dbReference type="Rhea" id="RHEA-COMP:10087"/>
        <dbReference type="ChEBI" id="CHEBI:65314"/>
        <dbReference type="ChEBI" id="CHEBI:65315"/>
        <dbReference type="EC" id="5.4.99.12"/>
    </reaction>
</comment>
<comment type="subunit">
    <text evidence="1">Homodimer.</text>
</comment>
<comment type="similarity">
    <text evidence="1">Belongs to the tRNA pseudouridine synthase TruA family.</text>
</comment>
<feature type="chain" id="PRO_1000017136" description="tRNA pseudouridine synthase A">
    <location>
        <begin position="1"/>
        <end position="268"/>
    </location>
</feature>
<feature type="active site" description="Nucleophile" evidence="1">
    <location>
        <position position="52"/>
    </location>
</feature>
<feature type="binding site" evidence="1">
    <location>
        <position position="110"/>
    </location>
    <ligand>
        <name>substrate</name>
    </ligand>
</feature>
<reference key="1">
    <citation type="journal article" date="2007" name="PLoS Genet.">
        <title>Patterns and implications of gene gain and loss in the evolution of Prochlorococcus.</title>
        <authorList>
            <person name="Kettler G.C."/>
            <person name="Martiny A.C."/>
            <person name="Huang K."/>
            <person name="Zucker J."/>
            <person name="Coleman M.L."/>
            <person name="Rodrigue S."/>
            <person name="Chen F."/>
            <person name="Lapidus A."/>
            <person name="Ferriera S."/>
            <person name="Johnson J."/>
            <person name="Steglich C."/>
            <person name="Church G.M."/>
            <person name="Richardson P."/>
            <person name="Chisholm S.W."/>
        </authorList>
    </citation>
    <scope>NUCLEOTIDE SEQUENCE [LARGE SCALE GENOMIC DNA]</scope>
    <source>
        <strain>MIT 9301</strain>
    </source>
</reference>
<keyword id="KW-0413">Isomerase</keyword>
<keyword id="KW-1185">Reference proteome</keyword>
<keyword id="KW-0819">tRNA processing</keyword>
<sequence length="268" mass="30645">MKRVALLVQYDGSHYSGWQKQKNATTVQEILDRALLKITNHTVQTFAAGRTDAGVHASGQVVHCDVDCVVPGNSYSDVLNSLLPSSIRILESIEVKDSWHACYSALYRHYRYVINNSKFPNLFIDNWSWHRYQKVLDEVLMLNASRQMIGEHDFFAFQKTGSNRTNSITKIKNIDIKRVEDLIFVDIKATGFLYGMVRLIIGQLVLVGENKISPEIFTDRWVNKKKNDVKESAPAKGLCFVNAVYEENVFKKINNNDFFPVFIIKGFS</sequence>
<accession>A3PF23</accession>
<organism>
    <name type="scientific">Prochlorococcus marinus (strain MIT 9301)</name>
    <dbReference type="NCBI Taxonomy" id="167546"/>
    <lineage>
        <taxon>Bacteria</taxon>
        <taxon>Bacillati</taxon>
        <taxon>Cyanobacteriota</taxon>
        <taxon>Cyanophyceae</taxon>
        <taxon>Synechococcales</taxon>
        <taxon>Prochlorococcaceae</taxon>
        <taxon>Prochlorococcus</taxon>
    </lineage>
</organism>
<name>TRUA_PROM0</name>